<organism>
    <name type="scientific">Bacteroides fragilis (strain YCH46)</name>
    <dbReference type="NCBI Taxonomy" id="295405"/>
    <lineage>
        <taxon>Bacteria</taxon>
        <taxon>Pseudomonadati</taxon>
        <taxon>Bacteroidota</taxon>
        <taxon>Bacteroidia</taxon>
        <taxon>Bacteroidales</taxon>
        <taxon>Bacteroidaceae</taxon>
        <taxon>Bacteroides</taxon>
    </lineage>
</organism>
<accession>Q64SY6</accession>
<reference key="1">
    <citation type="journal article" date="2004" name="Proc. Natl. Acad. Sci. U.S.A.">
        <title>Genomic analysis of Bacteroides fragilis reveals extensive DNA inversions regulating cell surface adaptation.</title>
        <authorList>
            <person name="Kuwahara T."/>
            <person name="Yamashita A."/>
            <person name="Hirakawa H."/>
            <person name="Nakayama H."/>
            <person name="Toh H."/>
            <person name="Okada N."/>
            <person name="Kuhara S."/>
            <person name="Hattori M."/>
            <person name="Hayashi T."/>
            <person name="Ohnishi Y."/>
        </authorList>
    </citation>
    <scope>NUCLEOTIDE SEQUENCE [LARGE SCALE GENOMIC DNA]</scope>
    <source>
        <strain>YCH46</strain>
    </source>
</reference>
<feature type="chain" id="PRO_0000342213" description="LL-diaminopimelate aminotransferase">
    <location>
        <begin position="1"/>
        <end position="410"/>
    </location>
</feature>
<feature type="binding site" evidence="1">
    <location>
        <position position="15"/>
    </location>
    <ligand>
        <name>substrate</name>
    </ligand>
</feature>
<feature type="binding site" evidence="1">
    <location>
        <position position="42"/>
    </location>
    <ligand>
        <name>substrate</name>
    </ligand>
</feature>
<feature type="binding site" evidence="1">
    <location>
        <position position="72"/>
    </location>
    <ligand>
        <name>pyridoxal 5'-phosphate</name>
        <dbReference type="ChEBI" id="CHEBI:597326"/>
    </ligand>
</feature>
<feature type="binding site" evidence="1">
    <location>
        <begin position="108"/>
        <end position="109"/>
    </location>
    <ligand>
        <name>pyridoxal 5'-phosphate</name>
        <dbReference type="ChEBI" id="CHEBI:597326"/>
    </ligand>
</feature>
<feature type="binding site" evidence="1">
    <location>
        <position position="109"/>
    </location>
    <ligand>
        <name>substrate</name>
    </ligand>
</feature>
<feature type="binding site" evidence="1">
    <location>
        <position position="132"/>
    </location>
    <ligand>
        <name>pyridoxal 5'-phosphate</name>
        <dbReference type="ChEBI" id="CHEBI:597326"/>
    </ligand>
</feature>
<feature type="binding site" evidence="1">
    <location>
        <position position="132"/>
    </location>
    <ligand>
        <name>substrate</name>
    </ligand>
</feature>
<feature type="binding site" evidence="1">
    <location>
        <position position="188"/>
    </location>
    <ligand>
        <name>pyridoxal 5'-phosphate</name>
        <dbReference type="ChEBI" id="CHEBI:597326"/>
    </ligand>
</feature>
<feature type="binding site" evidence="1">
    <location>
        <position position="188"/>
    </location>
    <ligand>
        <name>substrate</name>
    </ligand>
</feature>
<feature type="binding site" evidence="1">
    <location>
        <position position="219"/>
    </location>
    <ligand>
        <name>pyridoxal 5'-phosphate</name>
        <dbReference type="ChEBI" id="CHEBI:597326"/>
    </ligand>
</feature>
<feature type="binding site" evidence="1">
    <location>
        <begin position="247"/>
        <end position="249"/>
    </location>
    <ligand>
        <name>pyridoxal 5'-phosphate</name>
        <dbReference type="ChEBI" id="CHEBI:597326"/>
    </ligand>
</feature>
<feature type="binding site" evidence="1">
    <location>
        <position position="258"/>
    </location>
    <ligand>
        <name>pyridoxal 5'-phosphate</name>
        <dbReference type="ChEBI" id="CHEBI:597326"/>
    </ligand>
</feature>
<feature type="binding site" evidence="1">
    <location>
        <position position="293"/>
    </location>
    <ligand>
        <name>pyridoxal 5'-phosphate</name>
        <dbReference type="ChEBI" id="CHEBI:597326"/>
    </ligand>
</feature>
<feature type="binding site" evidence="1">
    <location>
        <position position="293"/>
    </location>
    <ligand>
        <name>substrate</name>
    </ligand>
</feature>
<feature type="binding site" evidence="1">
    <location>
        <position position="389"/>
    </location>
    <ligand>
        <name>substrate</name>
    </ligand>
</feature>
<feature type="modified residue" description="N6-(pyridoxal phosphate)lysine" evidence="1">
    <location>
        <position position="250"/>
    </location>
</feature>
<gene>
    <name evidence="1" type="primary">dapL</name>
    <name type="ordered locus">BF2643</name>
</gene>
<dbReference type="EC" id="2.6.1.83" evidence="1"/>
<dbReference type="EMBL" id="AP006841">
    <property type="protein sequence ID" value="BAD49393.1"/>
    <property type="molecule type" value="Genomic_DNA"/>
</dbReference>
<dbReference type="RefSeq" id="WP_005788259.1">
    <property type="nucleotide sequence ID" value="NC_006347.1"/>
</dbReference>
<dbReference type="RefSeq" id="YP_099927.1">
    <property type="nucleotide sequence ID" value="NC_006347.1"/>
</dbReference>
<dbReference type="SMR" id="Q64SY6"/>
<dbReference type="STRING" id="295405.BF2643"/>
<dbReference type="KEGG" id="bfr:BF2643"/>
<dbReference type="PATRIC" id="fig|295405.11.peg.2555"/>
<dbReference type="HOGENOM" id="CLU_051433_0_0_10"/>
<dbReference type="OrthoDB" id="9813612at2"/>
<dbReference type="UniPathway" id="UPA00034">
    <property type="reaction ID" value="UER00466"/>
</dbReference>
<dbReference type="Proteomes" id="UP000002197">
    <property type="component" value="Chromosome"/>
</dbReference>
<dbReference type="GO" id="GO:0010285">
    <property type="term" value="F:L,L-diaminopimelate aminotransferase activity"/>
    <property type="evidence" value="ECO:0007669"/>
    <property type="project" value="UniProtKB-UniRule"/>
</dbReference>
<dbReference type="GO" id="GO:0030170">
    <property type="term" value="F:pyridoxal phosphate binding"/>
    <property type="evidence" value="ECO:0007669"/>
    <property type="project" value="UniProtKB-UniRule"/>
</dbReference>
<dbReference type="GO" id="GO:0033362">
    <property type="term" value="P:lysine biosynthetic process via diaminopimelate, diaminopimelate-aminotransferase pathway"/>
    <property type="evidence" value="ECO:0007669"/>
    <property type="project" value="UniProtKB-UniRule"/>
</dbReference>
<dbReference type="CDD" id="cd00609">
    <property type="entry name" value="AAT_like"/>
    <property type="match status" value="1"/>
</dbReference>
<dbReference type="FunFam" id="3.40.640.10:FF:000099">
    <property type="entry name" value="LL-diaminopimelate aminotransferase, chloroplastic"/>
    <property type="match status" value="1"/>
</dbReference>
<dbReference type="Gene3D" id="3.90.1150.10">
    <property type="entry name" value="Aspartate Aminotransferase, domain 1"/>
    <property type="match status" value="1"/>
</dbReference>
<dbReference type="Gene3D" id="3.40.640.10">
    <property type="entry name" value="Type I PLP-dependent aspartate aminotransferase-like (Major domain)"/>
    <property type="match status" value="1"/>
</dbReference>
<dbReference type="HAMAP" id="MF_01642">
    <property type="entry name" value="DapL_aminotrans_1"/>
    <property type="match status" value="1"/>
</dbReference>
<dbReference type="InterPro" id="IPR004839">
    <property type="entry name" value="Aminotransferase_I/II_large"/>
</dbReference>
<dbReference type="InterPro" id="IPR019942">
    <property type="entry name" value="DapL/ALD1"/>
</dbReference>
<dbReference type="InterPro" id="IPR015424">
    <property type="entry name" value="PyrdxlP-dep_Trfase"/>
</dbReference>
<dbReference type="InterPro" id="IPR015421">
    <property type="entry name" value="PyrdxlP-dep_Trfase_major"/>
</dbReference>
<dbReference type="InterPro" id="IPR015422">
    <property type="entry name" value="PyrdxlP-dep_Trfase_small"/>
</dbReference>
<dbReference type="NCBIfam" id="TIGR03542">
    <property type="entry name" value="DAPAT_plant"/>
    <property type="match status" value="1"/>
</dbReference>
<dbReference type="PANTHER" id="PTHR43144">
    <property type="entry name" value="AMINOTRANSFERASE"/>
    <property type="match status" value="1"/>
</dbReference>
<dbReference type="Pfam" id="PF00155">
    <property type="entry name" value="Aminotran_1_2"/>
    <property type="match status" value="1"/>
</dbReference>
<dbReference type="SUPFAM" id="SSF53383">
    <property type="entry name" value="PLP-dependent transferases"/>
    <property type="match status" value="1"/>
</dbReference>
<comment type="function">
    <text evidence="1">Involved in the synthesis of meso-diaminopimelate (m-DAP or DL-DAP), required for both lysine and peptidoglycan biosynthesis. Catalyzes the direct conversion of tetrahydrodipicolinate to LL-diaminopimelate.</text>
</comment>
<comment type="catalytic activity">
    <reaction evidence="1">
        <text>(2S,6S)-2,6-diaminopimelate + 2-oxoglutarate = (S)-2,3,4,5-tetrahydrodipicolinate + L-glutamate + H2O + H(+)</text>
        <dbReference type="Rhea" id="RHEA:23988"/>
        <dbReference type="ChEBI" id="CHEBI:15377"/>
        <dbReference type="ChEBI" id="CHEBI:15378"/>
        <dbReference type="ChEBI" id="CHEBI:16810"/>
        <dbReference type="ChEBI" id="CHEBI:16845"/>
        <dbReference type="ChEBI" id="CHEBI:29985"/>
        <dbReference type="ChEBI" id="CHEBI:57609"/>
        <dbReference type="EC" id="2.6.1.83"/>
    </reaction>
</comment>
<comment type="cofactor">
    <cofactor evidence="1">
        <name>pyridoxal 5'-phosphate</name>
        <dbReference type="ChEBI" id="CHEBI:597326"/>
    </cofactor>
</comment>
<comment type="pathway">
    <text evidence="1">Amino-acid biosynthesis; L-lysine biosynthesis via DAP pathway; LL-2,6-diaminopimelate from (S)-tetrahydrodipicolinate (aminotransferase route): step 1/1.</text>
</comment>
<comment type="subunit">
    <text evidence="1">Homodimer.</text>
</comment>
<comment type="similarity">
    <text evidence="1">Belongs to the class-I pyridoxal-phosphate-dependent aminotransferase family. LL-diaminopimelate aminotransferase subfamily.</text>
</comment>
<evidence type="ECO:0000255" key="1">
    <source>
        <dbReference type="HAMAP-Rule" id="MF_01642"/>
    </source>
</evidence>
<protein>
    <recommendedName>
        <fullName evidence="1">LL-diaminopimelate aminotransferase</fullName>
        <shortName evidence="1">DAP-AT</shortName>
        <shortName evidence="1">DAP-aminotransferase</shortName>
        <shortName evidence="1">LL-DAP-aminotransferase</shortName>
        <ecNumber evidence="1">2.6.1.83</ecNumber>
    </recommendedName>
</protein>
<sequence>MALVNEHFLKLPGSYLFSDIAKKVNTFKITHPKRDIIRLGIGDVTRPLPKACIEAMHKAVEEMTSAETFRGYGPEQGYDFLIEAIIKNDYAPRGIHLSPTEVFVNDGAKSDTGNIGDILRHDNSVGVTDPIYPVYIDSNVMCGRAGVLDTESGKWSNVTYMPCTAENHFIPAIPEKRIDIVYLCYPNNPTGTTLTKAELKKWVDYALANDTLILFDAAYEAYIREPDIPHSIYEIKGAKKCAIEFRSFSKTAGFTGVRCGYTVVPKELTAATLEGERIPLNRLWNRRQCTKFNGTSYITQRAAEAIYTPEGKEQIQETINYYMTNARIMKEGLESTGLKVYGGVNAPYLWVKTPNGTSSWRFFDQMLYEANVVGTPGVGFGPSGEGYIRLTAFGERDDCIEAMRRIKNRL</sequence>
<proteinExistence type="inferred from homology"/>
<name>DAPAT_BACFR</name>
<keyword id="KW-0032">Aminotransferase</keyword>
<keyword id="KW-0663">Pyridoxal phosphate</keyword>
<keyword id="KW-0808">Transferase</keyword>